<accession>P02663</accession>
<accession>Q1RMQ6</accession>
<accession>Q9TR51</accession>
<proteinExistence type="evidence at protein level"/>
<reference key="1">
    <citation type="journal article" date="1987" name="Mol. Biol. Evol.">
        <title>Complete nucleotide sequences of bovine alpha S2- and beta-casein cDNAs: comparisons with related sequences in other species.</title>
        <authorList>
            <person name="Stewart A.F."/>
            <person name="Bonsing J."/>
            <person name="Beattie C.W."/>
            <person name="Shah F."/>
            <person name="Willis I.M."/>
            <person name="Mackinlay A.G."/>
        </authorList>
    </citation>
    <scope>NUCLEOTIDE SEQUENCE [MRNA]</scope>
</reference>
<reference key="2">
    <citation type="submission" date="2006-04" db="EMBL/GenBank/DDBJ databases">
        <authorList>
            <consortium name="NIH - Mammalian Gene Collection (MGC) project"/>
        </authorList>
    </citation>
    <scope>NUCLEOTIDE SEQUENCE [LARGE SCALE MRNA]</scope>
    <source>
        <strain>Crossbred X Angus</strain>
        <tissue>Liver</tissue>
    </source>
</reference>
<reference key="3">
    <citation type="journal article" date="1977" name="FEBS Lett.">
        <title>Complete amino acid sequence of bovine alphaS2-casein.</title>
        <authorList>
            <person name="Brignon G."/>
            <person name="Ribadeau-Dumas B."/>
            <person name="Mercier J.-C."/>
            <person name="Pelissier J.-P."/>
            <person name="Das B.C."/>
        </authorList>
    </citation>
    <scope>PROTEIN SEQUENCE OF 16-222 (A ALLELE)</scope>
    <source>
        <tissue>Milk</tissue>
    </source>
</reference>
<reference key="4">
    <citation type="journal article" date="1979" name="J. Dairy Res.">
        <title>A genetic and biochemical analysis of a polymorphism of bovine alpha S2-casein.</title>
        <authorList>
            <person name="Grosclaude F."/>
            <person name="Joudrier P."/>
            <person name="Mahe M.-F."/>
        </authorList>
    </citation>
    <scope>PARTIAL PROTEIN SEQUENCE (D ALLELE)</scope>
    <source>
        <tissue>Milk</tissue>
    </source>
</reference>
<reference key="5">
    <citation type="journal article" date="1995" name="FEBS Lett.">
        <title>Casocidin-I: a casein-alpha s2 derived peptide exhibits antibacterial activity.</title>
        <authorList>
            <person name="Zucht H.-D."/>
            <person name="Raida M."/>
            <person name="Adermann K."/>
            <person name="Meagert H.-J."/>
            <person name="Forssmann W.-G."/>
        </authorList>
    </citation>
    <scope>PROTEIN SEQUENCE OF 165-203</scope>
    <scope>CHARACTERIZATION OF CASOCIDIN</scope>
    <scope>MASS SPECTROMETRY</scope>
    <source>
        <tissue>Milk</tissue>
    </source>
</reference>
<reference key="6">
    <citation type="submission" date="2005-09" db="UniProtKB">
        <authorList>
            <person name="Bai F."/>
            <person name="Liu S."/>
            <person name="Witzmann F.A."/>
        </authorList>
    </citation>
    <scope>PHOSPHORYLATION AT SER-46 AND SER-158</scope>
</reference>
<reference key="7">
    <citation type="journal article" date="2007" name="Mol. Cell. Proteomics">
        <title>Reference-facilitated phosphoproteomics: fast and reliable phosphopeptide validation by micro LC-ESI-Q-TOF MS/MS.</title>
        <authorList>
            <person name="Imanishi S.Y."/>
            <person name="Kochin V."/>
            <person name="Ferraris S.E."/>
            <person name="de Thonel A."/>
            <person name="Pallari H.M."/>
            <person name="Corthals G.L."/>
            <person name="Eriksson J.E."/>
        </authorList>
    </citation>
    <scope>PHOSPHORYLATION AT SER-23; SER-24; SER-25; SER-28; SER-71; SER-72; SER-73; SER-76 AND SER-158</scope>
    <scope>IDENTIFICATION BY MASS SPECTROMETRY</scope>
</reference>
<gene>
    <name type="primary">CSN1S2</name>
</gene>
<evidence type="ECO:0000250" key="1">
    <source>
        <dbReference type="UniProtKB" id="O97944"/>
    </source>
</evidence>
<evidence type="ECO:0000269" key="2">
    <source>
    </source>
</evidence>
<evidence type="ECO:0000269" key="3">
    <source>
    </source>
</evidence>
<evidence type="ECO:0000269" key="4">
    <source>
    </source>
</evidence>
<evidence type="ECO:0000269" key="5">
    <source ref="6"/>
</evidence>
<evidence type="ECO:0000305" key="6"/>
<evidence type="ECO:0007829" key="7">
    <source>
        <dbReference type="PDB" id="6FS4"/>
    </source>
</evidence>
<evidence type="ECO:0007829" key="8">
    <source>
        <dbReference type="PDB" id="6FS5"/>
    </source>
</evidence>
<protein>
    <recommendedName>
        <fullName>Alpha-S2-casein</fullName>
    </recommendedName>
    <component>
        <recommendedName>
            <fullName>Casocidin-1</fullName>
        </recommendedName>
        <alternativeName>
            <fullName>Casocidin-I</fullName>
        </alternativeName>
    </component>
</protein>
<sequence>MKFFIFTCLLAVALAKNTMEHVSSSEESIISQETYKQEKNMAINPSKENLCSTFCKEVVRNANEEEYSIGSSSEESAEVATEEVKITVDDKHYQKALNEINQFYQKFPQYLQYLYQGPIVLNPWDQVKRNAVPITPTLNREQLSTSEENSKKTVDMESTEVFTKKTKLTEEEKNRLNFLKKISQRYQKFALPQYLKTVYQHQKAMKPWIQPKTKVIPYVRYL</sequence>
<name>CASA2_BOVIN</name>
<dbReference type="EMBL" id="M16644">
    <property type="protein sequence ID" value="AAA30479.1"/>
    <property type="molecule type" value="mRNA"/>
</dbReference>
<dbReference type="EMBL" id="BC114773">
    <property type="protein sequence ID" value="AAI14774.1"/>
    <property type="molecule type" value="mRNA"/>
</dbReference>
<dbReference type="PIR" id="JQ2008">
    <property type="entry name" value="KABOS2"/>
</dbReference>
<dbReference type="RefSeq" id="NP_776953.1">
    <property type="nucleotide sequence ID" value="NM_174528.2"/>
</dbReference>
<dbReference type="RefSeq" id="XP_024848785.1">
    <property type="nucleotide sequence ID" value="XM_024993017.2"/>
</dbReference>
<dbReference type="PDB" id="6FS4">
    <property type="method" value="NMR"/>
    <property type="chains" value="A=166-196"/>
</dbReference>
<dbReference type="PDB" id="6FS5">
    <property type="method" value="NMR"/>
    <property type="chains" value="A=165-203"/>
</dbReference>
<dbReference type="PDBsum" id="6FS4"/>
<dbReference type="PDBsum" id="6FS5"/>
<dbReference type="SMR" id="P02663"/>
<dbReference type="FunCoup" id="P02663">
    <property type="interactions" value="1"/>
</dbReference>
<dbReference type="STRING" id="9913.ENSBTAP00000006590"/>
<dbReference type="Allergome" id="10198">
    <property type="allergen name" value="Bos d 10.0101"/>
</dbReference>
<dbReference type="Allergome" id="167">
    <property type="allergen name" value="Bos d 8"/>
</dbReference>
<dbReference type="Allergome" id="2735">
    <property type="allergen name" value="Bos d 10"/>
</dbReference>
<dbReference type="CarbonylDB" id="P02663"/>
<dbReference type="GlyGen" id="P02663">
    <property type="glycosylation" value="1 site, 1 O-linked glycan (1 site)"/>
</dbReference>
<dbReference type="iPTMnet" id="P02663"/>
<dbReference type="PaxDb" id="9913-ENSBTAP00000006590"/>
<dbReference type="PeptideAtlas" id="P02663"/>
<dbReference type="Ensembl" id="ENSBTAT00000006590.7">
    <property type="protein sequence ID" value="ENSBTAP00000006590.5"/>
    <property type="gene ID" value="ENSBTAG00000005005.7"/>
</dbReference>
<dbReference type="GeneID" id="282209"/>
<dbReference type="KEGG" id="bta:282209"/>
<dbReference type="CTD" id="282209"/>
<dbReference type="VEuPathDB" id="HostDB:ENSBTAG00000005005"/>
<dbReference type="eggNOG" id="ENOG502TDWX">
    <property type="taxonomic scope" value="Eukaryota"/>
</dbReference>
<dbReference type="GeneTree" id="ENSGT00940000164399"/>
<dbReference type="HOGENOM" id="CLU_121717_0_0_1"/>
<dbReference type="InParanoid" id="P02663"/>
<dbReference type="OMA" id="VMNPWDQ"/>
<dbReference type="OrthoDB" id="9564348at2759"/>
<dbReference type="TreeFam" id="TF339561"/>
<dbReference type="PRO" id="PR:P02663"/>
<dbReference type="Proteomes" id="UP000009136">
    <property type="component" value="Chromosome 6"/>
</dbReference>
<dbReference type="Bgee" id="ENSBTAG00000005005">
    <property type="expression patterns" value="Expressed in milk and 29 other cell types or tissues"/>
</dbReference>
<dbReference type="GO" id="GO:0005615">
    <property type="term" value="C:extracellular space"/>
    <property type="evidence" value="ECO:0000314"/>
    <property type="project" value="AgBase"/>
</dbReference>
<dbReference type="GO" id="GO:0005794">
    <property type="term" value="C:Golgi apparatus"/>
    <property type="evidence" value="ECO:0000314"/>
    <property type="project" value="AgBase"/>
</dbReference>
<dbReference type="GO" id="GO:0005796">
    <property type="term" value="C:Golgi lumen"/>
    <property type="evidence" value="ECO:0000314"/>
    <property type="project" value="AgBase"/>
</dbReference>
<dbReference type="GO" id="GO:0042803">
    <property type="term" value="F:protein homodimerization activity"/>
    <property type="evidence" value="ECO:0000314"/>
    <property type="project" value="AgBase"/>
</dbReference>
<dbReference type="GO" id="GO:0035375">
    <property type="term" value="F:zymogen binding"/>
    <property type="evidence" value="ECO:0000353"/>
    <property type="project" value="AgBase"/>
</dbReference>
<dbReference type="GO" id="GO:0042742">
    <property type="term" value="P:defense response to bacterium"/>
    <property type="evidence" value="ECO:0007669"/>
    <property type="project" value="UniProtKB-KW"/>
</dbReference>
<dbReference type="GO" id="GO:1903496">
    <property type="term" value="P:response to 11-deoxycorticosterone"/>
    <property type="evidence" value="ECO:0000314"/>
    <property type="project" value="AgBase"/>
</dbReference>
<dbReference type="GO" id="GO:1903494">
    <property type="term" value="P:response to dehydroepiandrosterone"/>
    <property type="evidence" value="ECO:0000314"/>
    <property type="project" value="AgBase"/>
</dbReference>
<dbReference type="GO" id="GO:0032355">
    <property type="term" value="P:response to estradiol"/>
    <property type="evidence" value="ECO:0000314"/>
    <property type="project" value="AgBase"/>
</dbReference>
<dbReference type="GO" id="GO:0060416">
    <property type="term" value="P:response to growth hormone"/>
    <property type="evidence" value="ECO:0000314"/>
    <property type="project" value="AgBase"/>
</dbReference>
<dbReference type="GO" id="GO:0032570">
    <property type="term" value="P:response to progesterone"/>
    <property type="evidence" value="ECO:0000314"/>
    <property type="project" value="AgBase"/>
</dbReference>
<dbReference type="InterPro" id="IPR011175">
    <property type="entry name" value="Alpha-s2_casein"/>
</dbReference>
<dbReference type="InterPro" id="IPR001588">
    <property type="entry name" value="Casein"/>
</dbReference>
<dbReference type="InterPro" id="IPR031305">
    <property type="entry name" value="Casein_CS"/>
</dbReference>
<dbReference type="PANTHER" id="PTHR16656">
    <property type="entry name" value="ALPHA-S2-CASEIN-LIKE B"/>
    <property type="match status" value="1"/>
</dbReference>
<dbReference type="PANTHER" id="PTHR16656:SF5">
    <property type="entry name" value="ALPHA-S2-CASEIN-LIKE B"/>
    <property type="match status" value="1"/>
</dbReference>
<dbReference type="Pfam" id="PF00363">
    <property type="entry name" value="Casein"/>
    <property type="match status" value="1"/>
</dbReference>
<dbReference type="PIRSF" id="PIRSF002371">
    <property type="entry name" value="Alpha-s2-casein"/>
    <property type="match status" value="1"/>
</dbReference>
<dbReference type="PROSITE" id="PS00306">
    <property type="entry name" value="CASEIN_ALPHA_BETA"/>
    <property type="match status" value="1"/>
</dbReference>
<comment type="function">
    <text>Important role in the capacity of milk to transport calcium phosphate.</text>
</comment>
<comment type="function">
    <text>Casocidin-I inhibits the growth of E.coli and S.carnosus.</text>
</comment>
<comment type="subcellular location">
    <subcellularLocation>
        <location>Secreted</location>
    </subcellularLocation>
</comment>
<comment type="tissue specificity">
    <text>Mammary gland specific. Secreted in milk.</text>
</comment>
<comment type="mass spectrometry">
    <molecule>Casocidin-1</molecule>
</comment>
<comment type="polymorphism">
    <text>At least two alleles exist. The sequence of the A allele is shown here. The D allele sequence differs from that shown in having a deletion of nine residues, which may be 49-58, 50-59, or 51-60.</text>
</comment>
<comment type="similarity">
    <text evidence="6">Belongs to the alpha-casein family.</text>
</comment>
<comment type="online information" name="Protein Spotlight">
    <link uri="https://www.proteinspotlight.org/back_issues/016"/>
    <text>Of buttons, digestion and glue - Issue 16 of November 2001</text>
</comment>
<feature type="signal peptide" evidence="4">
    <location>
        <begin position="1"/>
        <end position="15"/>
    </location>
</feature>
<feature type="chain" id="PRO_0000004460" description="Alpha-S2-casein">
    <location>
        <begin position="16"/>
        <end position="222"/>
    </location>
</feature>
<feature type="peptide" id="PRO_0000004461" description="Casocidin-1">
    <location>
        <begin position="165"/>
        <end position="203"/>
    </location>
</feature>
<feature type="repeat">
    <location>
        <begin position="76"/>
        <end position="140"/>
    </location>
</feature>
<feature type="repeat">
    <location>
        <begin position="158"/>
        <end position="222"/>
    </location>
</feature>
<feature type="modified residue" description="Phosphoserine" evidence="2">
    <location>
        <position position="23"/>
    </location>
</feature>
<feature type="modified residue" description="Phosphoserine" evidence="2">
    <location>
        <position position="24"/>
    </location>
</feature>
<feature type="modified residue" description="Phosphoserine" evidence="2">
    <location>
        <position position="25"/>
    </location>
</feature>
<feature type="modified residue" description="Phosphoserine" evidence="2">
    <location>
        <position position="28"/>
    </location>
</feature>
<feature type="modified residue" description="Phosphoserine" evidence="5">
    <location>
        <position position="46"/>
    </location>
</feature>
<feature type="modified residue" description="Phosphoserine" evidence="2">
    <location>
        <position position="71"/>
    </location>
</feature>
<feature type="modified residue" description="Phosphoserine" evidence="2">
    <location>
        <position position="72"/>
    </location>
</feature>
<feature type="modified residue" description="Phosphoserine" evidence="2">
    <location>
        <position position="73"/>
    </location>
</feature>
<feature type="modified residue" description="Phosphoserine" evidence="2">
    <location>
        <position position="76"/>
    </location>
</feature>
<feature type="modified residue" description="Phosphoserine" evidence="1">
    <location>
        <position position="144"/>
    </location>
</feature>
<feature type="modified residue" description="Phosphoserine" evidence="1">
    <location>
        <position position="146"/>
    </location>
</feature>
<feature type="modified residue" description="Phosphoserine" evidence="1">
    <location>
        <position position="150"/>
    </location>
</feature>
<feature type="modified residue" description="Phosphoserine" evidence="2 5">
    <location>
        <position position="158"/>
    </location>
</feature>
<feature type="sequence conflict" description="In Ref. 2; AAI14774." evidence="6" ref="2">
    <original>A</original>
    <variation>D</variation>
    <location>
        <position position="42"/>
    </location>
</feature>
<feature type="sequence conflict" description="In Ref. 3; AA sequence." evidence="6" ref="3">
    <original>Q</original>
    <variation>E</variation>
    <location>
        <position position="102"/>
    </location>
</feature>
<feature type="sequence conflict" description="In Ref. 2; AAI14774." evidence="6" ref="2">
    <original>Q</original>
    <variation>R</variation>
    <location>
        <position position="105"/>
    </location>
</feature>
<feature type="helix" evidence="7">
    <location>
        <begin position="168"/>
        <end position="183"/>
    </location>
</feature>
<feature type="strand" evidence="7">
    <location>
        <begin position="187"/>
        <end position="189"/>
    </location>
</feature>
<feature type="helix" evidence="8">
    <location>
        <begin position="194"/>
        <end position="201"/>
    </location>
</feature>
<organism>
    <name type="scientific">Bos taurus</name>
    <name type="common">Bovine</name>
    <dbReference type="NCBI Taxonomy" id="9913"/>
    <lineage>
        <taxon>Eukaryota</taxon>
        <taxon>Metazoa</taxon>
        <taxon>Chordata</taxon>
        <taxon>Craniata</taxon>
        <taxon>Vertebrata</taxon>
        <taxon>Euteleostomi</taxon>
        <taxon>Mammalia</taxon>
        <taxon>Eutheria</taxon>
        <taxon>Laurasiatheria</taxon>
        <taxon>Artiodactyla</taxon>
        <taxon>Ruminantia</taxon>
        <taxon>Pecora</taxon>
        <taxon>Bovidae</taxon>
        <taxon>Bovinae</taxon>
        <taxon>Bos</taxon>
    </lineage>
</organism>
<keyword id="KW-0002">3D-structure</keyword>
<keyword id="KW-0044">Antibiotic</keyword>
<keyword id="KW-0929">Antimicrobial</keyword>
<keyword id="KW-0903">Direct protein sequencing</keyword>
<keyword id="KW-0494">Milk protein</keyword>
<keyword id="KW-0597">Phosphoprotein</keyword>
<keyword id="KW-1185">Reference proteome</keyword>
<keyword id="KW-0677">Repeat</keyword>
<keyword id="KW-0964">Secreted</keyword>
<keyword id="KW-0732">Signal</keyword>